<proteinExistence type="inferred from homology"/>
<sequence length="151" mass="16824">MKIVIQRVKQAQVSIENQIHNKISSGLLLLVGVGPDDGPDDLDYAVRKIVHMRIFSDQEGKMNLSVKDIEGEILSISQFTLHADTKKGNRPAFVKAAPPELASRLYDEFNQLLAQEVPTKMGIFGADMQVELINDGPVTIILDTKNRREEV</sequence>
<feature type="chain" id="PRO_1000081673" description="D-aminoacyl-tRNA deacylase">
    <location>
        <begin position="1"/>
        <end position="151"/>
    </location>
</feature>
<feature type="short sequence motif" description="Gly-cisPro motif, important for rejection of L-amino acids" evidence="1">
    <location>
        <begin position="136"/>
        <end position="137"/>
    </location>
</feature>
<evidence type="ECO:0000255" key="1">
    <source>
        <dbReference type="HAMAP-Rule" id="MF_00518"/>
    </source>
</evidence>
<comment type="function">
    <text evidence="1">An aminoacyl-tRNA editing enzyme that deacylates mischarged D-aminoacyl-tRNAs. Also deacylates mischarged glycyl-tRNA(Ala), protecting cells against glycine mischarging by AlaRS. Acts via tRNA-based rather than protein-based catalysis; rejects L-amino acids rather than detecting D-amino acids in the active site. By recycling D-aminoacyl-tRNA to D-amino acids and free tRNA molecules, this enzyme counteracts the toxicity associated with the formation of D-aminoacyl-tRNA entities in vivo and helps enforce protein L-homochirality.</text>
</comment>
<comment type="catalytic activity">
    <reaction evidence="1">
        <text>glycyl-tRNA(Ala) + H2O = tRNA(Ala) + glycine + H(+)</text>
        <dbReference type="Rhea" id="RHEA:53744"/>
        <dbReference type="Rhea" id="RHEA-COMP:9657"/>
        <dbReference type="Rhea" id="RHEA-COMP:13640"/>
        <dbReference type="ChEBI" id="CHEBI:15377"/>
        <dbReference type="ChEBI" id="CHEBI:15378"/>
        <dbReference type="ChEBI" id="CHEBI:57305"/>
        <dbReference type="ChEBI" id="CHEBI:78442"/>
        <dbReference type="ChEBI" id="CHEBI:78522"/>
        <dbReference type="EC" id="3.1.1.96"/>
    </reaction>
</comment>
<comment type="catalytic activity">
    <reaction evidence="1">
        <text>a D-aminoacyl-tRNA + H2O = a tRNA + a D-alpha-amino acid + H(+)</text>
        <dbReference type="Rhea" id="RHEA:13953"/>
        <dbReference type="Rhea" id="RHEA-COMP:10123"/>
        <dbReference type="Rhea" id="RHEA-COMP:10124"/>
        <dbReference type="ChEBI" id="CHEBI:15377"/>
        <dbReference type="ChEBI" id="CHEBI:15378"/>
        <dbReference type="ChEBI" id="CHEBI:59871"/>
        <dbReference type="ChEBI" id="CHEBI:78442"/>
        <dbReference type="ChEBI" id="CHEBI:79333"/>
        <dbReference type="EC" id="3.1.1.96"/>
    </reaction>
</comment>
<comment type="subunit">
    <text evidence="1">Homodimer.</text>
</comment>
<comment type="subcellular location">
    <subcellularLocation>
        <location evidence="1">Cytoplasm</location>
    </subcellularLocation>
</comment>
<comment type="domain">
    <text evidence="1">A Gly-cisPro motif from one monomer fits into the active site of the other monomer to allow specific chiral rejection of L-amino acids.</text>
</comment>
<comment type="similarity">
    <text evidence="1">Belongs to the DTD family.</text>
</comment>
<keyword id="KW-0963">Cytoplasm</keyword>
<keyword id="KW-0378">Hydrolase</keyword>
<keyword id="KW-1185">Reference proteome</keyword>
<keyword id="KW-0694">RNA-binding</keyword>
<keyword id="KW-0820">tRNA-binding</keyword>
<gene>
    <name evidence="1" type="primary">dtd</name>
    <name type="ordered locus">SGO_1821</name>
</gene>
<name>DTD_STRGC</name>
<accession>A8AZ80</accession>
<dbReference type="EC" id="3.1.1.96" evidence="1"/>
<dbReference type="EMBL" id="CP000725">
    <property type="protein sequence ID" value="ABV09326.1"/>
    <property type="molecule type" value="Genomic_DNA"/>
</dbReference>
<dbReference type="RefSeq" id="WP_012130855.1">
    <property type="nucleotide sequence ID" value="NC_009785.1"/>
</dbReference>
<dbReference type="SMR" id="A8AZ80"/>
<dbReference type="STRING" id="467705.SGO_1821"/>
<dbReference type="KEGG" id="sgo:SGO_1821"/>
<dbReference type="eggNOG" id="COG1490">
    <property type="taxonomic scope" value="Bacteria"/>
</dbReference>
<dbReference type="HOGENOM" id="CLU_076901_1_0_9"/>
<dbReference type="Proteomes" id="UP000001131">
    <property type="component" value="Chromosome"/>
</dbReference>
<dbReference type="GO" id="GO:0005737">
    <property type="term" value="C:cytoplasm"/>
    <property type="evidence" value="ECO:0007669"/>
    <property type="project" value="UniProtKB-SubCell"/>
</dbReference>
<dbReference type="GO" id="GO:0051500">
    <property type="term" value="F:D-tyrosyl-tRNA(Tyr) deacylase activity"/>
    <property type="evidence" value="ECO:0007669"/>
    <property type="project" value="TreeGrafter"/>
</dbReference>
<dbReference type="GO" id="GO:0106026">
    <property type="term" value="F:Gly-tRNA(Ala) deacylase activity"/>
    <property type="evidence" value="ECO:0007669"/>
    <property type="project" value="UniProtKB-UniRule"/>
</dbReference>
<dbReference type="GO" id="GO:0043908">
    <property type="term" value="F:Ser(Gly)-tRNA(Ala) hydrolase activity"/>
    <property type="evidence" value="ECO:0007669"/>
    <property type="project" value="UniProtKB-UniRule"/>
</dbReference>
<dbReference type="GO" id="GO:0000049">
    <property type="term" value="F:tRNA binding"/>
    <property type="evidence" value="ECO:0007669"/>
    <property type="project" value="UniProtKB-UniRule"/>
</dbReference>
<dbReference type="GO" id="GO:0019478">
    <property type="term" value="P:D-amino acid catabolic process"/>
    <property type="evidence" value="ECO:0007669"/>
    <property type="project" value="UniProtKB-UniRule"/>
</dbReference>
<dbReference type="FunFam" id="3.50.80.10:FF:000001">
    <property type="entry name" value="D-aminoacyl-tRNA deacylase"/>
    <property type="match status" value="1"/>
</dbReference>
<dbReference type="Gene3D" id="3.50.80.10">
    <property type="entry name" value="D-tyrosyl-tRNA(Tyr) deacylase"/>
    <property type="match status" value="1"/>
</dbReference>
<dbReference type="HAMAP" id="MF_00518">
    <property type="entry name" value="Deacylase_Dtd"/>
    <property type="match status" value="1"/>
</dbReference>
<dbReference type="InterPro" id="IPR003732">
    <property type="entry name" value="Daa-tRNA_deacyls_DTD"/>
</dbReference>
<dbReference type="InterPro" id="IPR023509">
    <property type="entry name" value="DTD-like_sf"/>
</dbReference>
<dbReference type="NCBIfam" id="TIGR00256">
    <property type="entry name" value="D-aminoacyl-tRNA deacylase"/>
    <property type="match status" value="1"/>
</dbReference>
<dbReference type="PANTHER" id="PTHR10472:SF5">
    <property type="entry name" value="D-AMINOACYL-TRNA DEACYLASE 1"/>
    <property type="match status" value="1"/>
</dbReference>
<dbReference type="PANTHER" id="PTHR10472">
    <property type="entry name" value="D-TYROSYL-TRNA TYR DEACYLASE"/>
    <property type="match status" value="1"/>
</dbReference>
<dbReference type="Pfam" id="PF02580">
    <property type="entry name" value="Tyr_Deacylase"/>
    <property type="match status" value="1"/>
</dbReference>
<dbReference type="SUPFAM" id="SSF69500">
    <property type="entry name" value="DTD-like"/>
    <property type="match status" value="1"/>
</dbReference>
<organism>
    <name type="scientific">Streptococcus gordonii (strain Challis / ATCC 35105 / BCRC 15272 / CH1 / DL1 / V288)</name>
    <dbReference type="NCBI Taxonomy" id="467705"/>
    <lineage>
        <taxon>Bacteria</taxon>
        <taxon>Bacillati</taxon>
        <taxon>Bacillota</taxon>
        <taxon>Bacilli</taxon>
        <taxon>Lactobacillales</taxon>
        <taxon>Streptococcaceae</taxon>
        <taxon>Streptococcus</taxon>
    </lineage>
</organism>
<protein>
    <recommendedName>
        <fullName evidence="1">D-aminoacyl-tRNA deacylase</fullName>
        <shortName evidence="1">DTD</shortName>
        <ecNumber evidence="1">3.1.1.96</ecNumber>
    </recommendedName>
    <alternativeName>
        <fullName evidence="1">Gly-tRNA(Ala) deacylase</fullName>
    </alternativeName>
</protein>
<reference key="1">
    <citation type="journal article" date="2007" name="J. Bacteriol.">
        <title>Genome-wide transcriptional changes in Streptococcus gordonii in response to competence signaling peptide.</title>
        <authorList>
            <person name="Vickerman M.M."/>
            <person name="Iobst S."/>
            <person name="Jesionowski A.M."/>
            <person name="Gill S.R."/>
        </authorList>
    </citation>
    <scope>NUCLEOTIDE SEQUENCE [LARGE SCALE GENOMIC DNA]</scope>
    <source>
        <strain>Challis / ATCC 35105 / BCRC 15272 / CH1 / DL1 / V288</strain>
    </source>
</reference>